<keyword id="KW-0030">Aminoacyl-tRNA synthetase</keyword>
<keyword id="KW-0067">ATP-binding</keyword>
<keyword id="KW-0963">Cytoplasm</keyword>
<keyword id="KW-0436">Ligase</keyword>
<keyword id="KW-0547">Nucleotide-binding</keyword>
<keyword id="KW-0648">Protein biosynthesis</keyword>
<accession>A8EZE6</accession>
<organism>
    <name type="scientific">Rickettsia canadensis (strain McKiel)</name>
    <dbReference type="NCBI Taxonomy" id="293613"/>
    <lineage>
        <taxon>Bacteria</taxon>
        <taxon>Pseudomonadati</taxon>
        <taxon>Pseudomonadota</taxon>
        <taxon>Alphaproteobacteria</taxon>
        <taxon>Rickettsiales</taxon>
        <taxon>Rickettsiaceae</taxon>
        <taxon>Rickettsieae</taxon>
        <taxon>Rickettsia</taxon>
        <taxon>belli group</taxon>
    </lineage>
</organism>
<reference key="1">
    <citation type="submission" date="2007-09" db="EMBL/GenBank/DDBJ databases">
        <title>Complete genome sequence of Rickettsia canadensis.</title>
        <authorList>
            <person name="Madan A."/>
            <person name="Fahey J."/>
            <person name="Helton E."/>
            <person name="Ketteman M."/>
            <person name="Madan A."/>
            <person name="Rodrigues S."/>
            <person name="Sanchez A."/>
            <person name="Whiting M."/>
            <person name="Dasch G."/>
            <person name="Eremeeva M."/>
        </authorList>
    </citation>
    <scope>NUCLEOTIDE SEQUENCE [LARGE SCALE GENOMIC DNA]</scope>
    <source>
        <strain>McKiel</strain>
    </source>
</reference>
<sequence>MLDKLQPLRGMKDLLPDDYKVHDYIINKARDVGVLYGYKQMSTPILEYTKVFNRSMGESSDIISKEIYSFLDKSNESVALRPEFTAGIIRSFISNNLRHKLPLKFFSTGPIFRYDRPQAGRQRQFHQLNYEYIGAKGAMTDAETLKLAVDILKALEIEQDTTLELNSLGCSESRSVYQQKLVEYLNDFKNQLSEESRVRLIKNPMRILDSKNEIDQKIVAAAPILSEYYTDESKEYFEDLIKYLNILGVKYRINPRLVRGLDYYCHTAFEFTTLKLGTQSTILAGGRYDGLAKIMGNNDDMPAIGFAAGIERIALMREYNVSLLSLVVVLPIGKNNICYALEIVDKLRTKNIATIIEPTGKIAKRMQRVLNENAKFIIFIGDEEQANNNLKLKDLETQEEYILDFAKTLELLKKY</sequence>
<proteinExistence type="inferred from homology"/>
<comment type="catalytic activity">
    <reaction evidence="1">
        <text>tRNA(His) + L-histidine + ATP = L-histidyl-tRNA(His) + AMP + diphosphate + H(+)</text>
        <dbReference type="Rhea" id="RHEA:17313"/>
        <dbReference type="Rhea" id="RHEA-COMP:9665"/>
        <dbReference type="Rhea" id="RHEA-COMP:9689"/>
        <dbReference type="ChEBI" id="CHEBI:15378"/>
        <dbReference type="ChEBI" id="CHEBI:30616"/>
        <dbReference type="ChEBI" id="CHEBI:33019"/>
        <dbReference type="ChEBI" id="CHEBI:57595"/>
        <dbReference type="ChEBI" id="CHEBI:78442"/>
        <dbReference type="ChEBI" id="CHEBI:78527"/>
        <dbReference type="ChEBI" id="CHEBI:456215"/>
        <dbReference type="EC" id="6.1.1.21"/>
    </reaction>
</comment>
<comment type="subunit">
    <text evidence="1">Homodimer.</text>
</comment>
<comment type="subcellular location">
    <subcellularLocation>
        <location evidence="1">Cytoplasm</location>
    </subcellularLocation>
</comment>
<comment type="similarity">
    <text evidence="1">Belongs to the class-II aminoacyl-tRNA synthetase family.</text>
</comment>
<gene>
    <name evidence="1" type="primary">hisS</name>
    <name type="ordered locus">A1E_04010</name>
</gene>
<feature type="chain" id="PRO_1000016437" description="Histidine--tRNA ligase">
    <location>
        <begin position="1"/>
        <end position="415"/>
    </location>
</feature>
<evidence type="ECO:0000255" key="1">
    <source>
        <dbReference type="HAMAP-Rule" id="MF_00127"/>
    </source>
</evidence>
<protein>
    <recommendedName>
        <fullName evidence="1">Histidine--tRNA ligase</fullName>
        <ecNumber evidence="1">6.1.1.21</ecNumber>
    </recommendedName>
    <alternativeName>
        <fullName evidence="1">Histidyl-tRNA synthetase</fullName>
        <shortName evidence="1">HisRS</shortName>
    </alternativeName>
</protein>
<dbReference type="EC" id="6.1.1.21" evidence="1"/>
<dbReference type="EMBL" id="CP000409">
    <property type="protein sequence ID" value="ABV73729.1"/>
    <property type="molecule type" value="Genomic_DNA"/>
</dbReference>
<dbReference type="RefSeq" id="WP_012148924.1">
    <property type="nucleotide sequence ID" value="NC_009879.1"/>
</dbReference>
<dbReference type="SMR" id="A8EZE6"/>
<dbReference type="STRING" id="293613.A1E_04010"/>
<dbReference type="KEGG" id="rcm:A1E_04010"/>
<dbReference type="eggNOG" id="COG0124">
    <property type="taxonomic scope" value="Bacteria"/>
</dbReference>
<dbReference type="HOGENOM" id="CLU_025113_1_0_5"/>
<dbReference type="Proteomes" id="UP000007056">
    <property type="component" value="Chromosome"/>
</dbReference>
<dbReference type="GO" id="GO:0005737">
    <property type="term" value="C:cytoplasm"/>
    <property type="evidence" value="ECO:0007669"/>
    <property type="project" value="UniProtKB-SubCell"/>
</dbReference>
<dbReference type="GO" id="GO:0005524">
    <property type="term" value="F:ATP binding"/>
    <property type="evidence" value="ECO:0007669"/>
    <property type="project" value="UniProtKB-UniRule"/>
</dbReference>
<dbReference type="GO" id="GO:0004821">
    <property type="term" value="F:histidine-tRNA ligase activity"/>
    <property type="evidence" value="ECO:0007669"/>
    <property type="project" value="UniProtKB-UniRule"/>
</dbReference>
<dbReference type="GO" id="GO:0006427">
    <property type="term" value="P:histidyl-tRNA aminoacylation"/>
    <property type="evidence" value="ECO:0007669"/>
    <property type="project" value="UniProtKB-UniRule"/>
</dbReference>
<dbReference type="CDD" id="cd00773">
    <property type="entry name" value="HisRS-like_core"/>
    <property type="match status" value="1"/>
</dbReference>
<dbReference type="CDD" id="cd00859">
    <property type="entry name" value="HisRS_anticodon"/>
    <property type="match status" value="1"/>
</dbReference>
<dbReference type="Gene3D" id="3.40.50.800">
    <property type="entry name" value="Anticodon-binding domain"/>
    <property type="match status" value="1"/>
</dbReference>
<dbReference type="Gene3D" id="3.30.930.10">
    <property type="entry name" value="Bira Bifunctional Protein, Domain 2"/>
    <property type="match status" value="1"/>
</dbReference>
<dbReference type="HAMAP" id="MF_00127">
    <property type="entry name" value="His_tRNA_synth"/>
    <property type="match status" value="1"/>
</dbReference>
<dbReference type="InterPro" id="IPR006195">
    <property type="entry name" value="aa-tRNA-synth_II"/>
</dbReference>
<dbReference type="InterPro" id="IPR045864">
    <property type="entry name" value="aa-tRNA-synth_II/BPL/LPL"/>
</dbReference>
<dbReference type="InterPro" id="IPR004154">
    <property type="entry name" value="Anticodon-bd"/>
</dbReference>
<dbReference type="InterPro" id="IPR036621">
    <property type="entry name" value="Anticodon-bd_dom_sf"/>
</dbReference>
<dbReference type="InterPro" id="IPR015807">
    <property type="entry name" value="His-tRNA-ligase"/>
</dbReference>
<dbReference type="InterPro" id="IPR041715">
    <property type="entry name" value="HisRS-like_core"/>
</dbReference>
<dbReference type="InterPro" id="IPR004516">
    <property type="entry name" value="HisRS/HisZ"/>
</dbReference>
<dbReference type="InterPro" id="IPR033656">
    <property type="entry name" value="HisRS_anticodon"/>
</dbReference>
<dbReference type="NCBIfam" id="TIGR00442">
    <property type="entry name" value="hisS"/>
    <property type="match status" value="1"/>
</dbReference>
<dbReference type="PANTHER" id="PTHR43707:SF1">
    <property type="entry name" value="HISTIDINE--TRNA LIGASE, MITOCHONDRIAL-RELATED"/>
    <property type="match status" value="1"/>
</dbReference>
<dbReference type="PANTHER" id="PTHR43707">
    <property type="entry name" value="HISTIDYL-TRNA SYNTHETASE"/>
    <property type="match status" value="1"/>
</dbReference>
<dbReference type="Pfam" id="PF03129">
    <property type="entry name" value="HGTP_anticodon"/>
    <property type="match status" value="1"/>
</dbReference>
<dbReference type="Pfam" id="PF13393">
    <property type="entry name" value="tRNA-synt_His"/>
    <property type="match status" value="1"/>
</dbReference>
<dbReference type="PIRSF" id="PIRSF001549">
    <property type="entry name" value="His-tRNA_synth"/>
    <property type="match status" value="1"/>
</dbReference>
<dbReference type="SUPFAM" id="SSF52954">
    <property type="entry name" value="Class II aaRS ABD-related"/>
    <property type="match status" value="1"/>
</dbReference>
<dbReference type="SUPFAM" id="SSF55681">
    <property type="entry name" value="Class II aaRS and biotin synthetases"/>
    <property type="match status" value="1"/>
</dbReference>
<dbReference type="PROSITE" id="PS50862">
    <property type="entry name" value="AA_TRNA_LIGASE_II"/>
    <property type="match status" value="1"/>
</dbReference>
<name>SYH_RICCK</name>